<keyword id="KW-0158">Chromosome</keyword>
<keyword id="KW-0217">Developmental protein</keyword>
<keyword id="KW-0221">Differentiation</keyword>
<keyword id="KW-0238">DNA-binding</keyword>
<keyword id="KW-0479">Metal-binding</keyword>
<keyword id="KW-0544">Nucleosome core</keyword>
<keyword id="KW-0539">Nucleus</keyword>
<keyword id="KW-1185">Reference proteome</keyword>
<keyword id="KW-0744">Spermatogenesis</keyword>
<keyword id="KW-0862">Zinc</keyword>
<feature type="chain" id="PRO_0000191427" description="Nuclear transition protein 2">
    <location>
        <begin position="1"/>
        <end position="137" status="greater than"/>
    </location>
</feature>
<feature type="region of interest" description="Disordered" evidence="3">
    <location>
        <begin position="1"/>
        <end position="137"/>
    </location>
</feature>
<feature type="short sequence motif" description="Nuclear localization signal" evidence="1">
    <location>
        <begin position="116"/>
        <end position="124"/>
    </location>
</feature>
<feature type="compositionally biased region" description="Polar residues" evidence="3">
    <location>
        <begin position="1"/>
        <end position="31"/>
    </location>
</feature>
<feature type="compositionally biased region" description="Low complexity" evidence="3">
    <location>
        <begin position="39"/>
        <end position="57"/>
    </location>
</feature>
<feature type="compositionally biased region" description="Polar residues" evidence="3">
    <location>
        <begin position="58"/>
        <end position="79"/>
    </location>
</feature>
<feature type="compositionally biased region" description="Polar residues" evidence="3">
    <location>
        <begin position="93"/>
        <end position="108"/>
    </location>
</feature>
<feature type="binding site" evidence="1">
    <location>
        <position position="12"/>
    </location>
    <ligand>
        <name>Zn(2+)</name>
        <dbReference type="ChEBI" id="CHEBI:29105"/>
    </ligand>
</feature>
<feature type="binding site" evidence="1">
    <location>
        <position position="16"/>
    </location>
    <ligand>
        <name>Zn(2+)</name>
        <dbReference type="ChEBI" id="CHEBI:29105"/>
    </ligand>
</feature>
<feature type="binding site" evidence="1">
    <location>
        <position position="29"/>
    </location>
    <ligand>
        <name>Zn(2+)</name>
        <dbReference type="ChEBI" id="CHEBI:29105"/>
    </ligand>
</feature>
<feature type="binding site" evidence="1">
    <location>
        <position position="31"/>
    </location>
    <ligand>
        <name>Zn(2+)</name>
        <dbReference type="ChEBI" id="CHEBI:29105"/>
    </ligand>
</feature>
<feature type="non-terminal residue">
    <location>
        <position position="137"/>
    </location>
</feature>
<gene>
    <name type="primary">TNP2</name>
</gene>
<evidence type="ECO:0000250" key="1">
    <source>
        <dbReference type="UniProtKB" id="P11101"/>
    </source>
</evidence>
<evidence type="ECO:0000250" key="2">
    <source>
        <dbReference type="UniProtKB" id="P11378"/>
    </source>
</evidence>
<evidence type="ECO:0000256" key="3">
    <source>
        <dbReference type="SAM" id="MobiDB-lite"/>
    </source>
</evidence>
<evidence type="ECO:0000305" key="4"/>
<proteinExistence type="evidence at transcript level"/>
<organism>
    <name type="scientific">Macaca mulatta</name>
    <name type="common">Rhesus macaque</name>
    <dbReference type="NCBI Taxonomy" id="9544"/>
    <lineage>
        <taxon>Eukaryota</taxon>
        <taxon>Metazoa</taxon>
        <taxon>Chordata</taxon>
        <taxon>Craniata</taxon>
        <taxon>Vertebrata</taxon>
        <taxon>Euteleostomi</taxon>
        <taxon>Mammalia</taxon>
        <taxon>Eutheria</taxon>
        <taxon>Euarchontoglires</taxon>
        <taxon>Primates</taxon>
        <taxon>Haplorrhini</taxon>
        <taxon>Catarrhini</taxon>
        <taxon>Cercopithecidae</taxon>
        <taxon>Cercopithecinae</taxon>
        <taxon>Macaca</taxon>
    </lineage>
</organism>
<comment type="function">
    <text evidence="2">Plays a key role in the replacement of histones to protamine in the elongating spermatids of mammals. In condensing spermatids, loaded onto the nucleosomes, where it promotes the recruitment and processing of protamines, which are responsible for histone eviction.</text>
</comment>
<comment type="subcellular location">
    <subcellularLocation>
        <location evidence="1">Nucleus</location>
    </subcellularLocation>
    <subcellularLocation>
        <location evidence="1">Nucleus</location>
        <location evidence="1">Nucleolus</location>
    </subcellularLocation>
    <subcellularLocation>
        <location evidence="1">Chromosome</location>
    </subcellularLocation>
    <text evidence="1 2">Loaded onto the nucleosomes of condensing spermatids (By similarity). Nuclear import is mediated by IPO4. Nucleolar localization requires the protein to be phosphorylated (By similarity).</text>
</comment>
<comment type="tissue specificity">
    <text>Testis.</text>
</comment>
<comment type="similarity">
    <text evidence="4">Belongs to the nuclear transition protein 2 family.</text>
</comment>
<accession>Q9N1A3</accession>
<dbReference type="EMBL" id="AF215720">
    <property type="protein sequence ID" value="AAF35859.1"/>
    <property type="molecule type" value="Genomic_DNA"/>
</dbReference>
<dbReference type="FunCoup" id="Q9N1A3">
    <property type="interactions" value="2"/>
</dbReference>
<dbReference type="STRING" id="9544.ENSMMUP00000014367"/>
<dbReference type="PaxDb" id="9544-ENSMMUP00000014367"/>
<dbReference type="eggNOG" id="KOG4566">
    <property type="taxonomic scope" value="Eukaryota"/>
</dbReference>
<dbReference type="InParanoid" id="Q9N1A3"/>
<dbReference type="Proteomes" id="UP000006718">
    <property type="component" value="Unassembled WGS sequence"/>
</dbReference>
<dbReference type="GO" id="GO:0005730">
    <property type="term" value="C:nucleolus"/>
    <property type="evidence" value="ECO:0007669"/>
    <property type="project" value="UniProtKB-SubCell"/>
</dbReference>
<dbReference type="GO" id="GO:0000786">
    <property type="term" value="C:nucleosome"/>
    <property type="evidence" value="ECO:0000250"/>
    <property type="project" value="UniProtKB"/>
</dbReference>
<dbReference type="GO" id="GO:0003677">
    <property type="term" value="F:DNA binding"/>
    <property type="evidence" value="ECO:0007669"/>
    <property type="project" value="UniProtKB-KW"/>
</dbReference>
<dbReference type="GO" id="GO:0008270">
    <property type="term" value="F:zinc ion binding"/>
    <property type="evidence" value="ECO:0000318"/>
    <property type="project" value="GO_Central"/>
</dbReference>
<dbReference type="GO" id="GO:0007340">
    <property type="term" value="P:acrosome reaction"/>
    <property type="evidence" value="ECO:0000318"/>
    <property type="project" value="GO_Central"/>
</dbReference>
<dbReference type="GO" id="GO:0007341">
    <property type="term" value="P:penetration of zona pellucida"/>
    <property type="evidence" value="ECO:0000318"/>
    <property type="project" value="GO_Central"/>
</dbReference>
<dbReference type="GO" id="GO:0010954">
    <property type="term" value="P:positive regulation of protein processing"/>
    <property type="evidence" value="ECO:0000250"/>
    <property type="project" value="UniProtKB"/>
</dbReference>
<dbReference type="GO" id="GO:0035092">
    <property type="term" value="P:sperm DNA condensation"/>
    <property type="evidence" value="ECO:0000250"/>
    <property type="project" value="UniProtKB"/>
</dbReference>
<dbReference type="GO" id="GO:0007283">
    <property type="term" value="P:spermatogenesis"/>
    <property type="evidence" value="ECO:0000318"/>
    <property type="project" value="GO_Central"/>
</dbReference>
<dbReference type="InterPro" id="IPR000678">
    <property type="entry name" value="TP2"/>
</dbReference>
<dbReference type="PANTHER" id="PTHR17488">
    <property type="entry name" value="NUCLEAR TRANSITION PROTEIN 2"/>
    <property type="match status" value="1"/>
</dbReference>
<dbReference type="PANTHER" id="PTHR17488:SF0">
    <property type="entry name" value="NUCLEAR TRANSITION PROTEIN 2"/>
    <property type="match status" value="1"/>
</dbReference>
<dbReference type="Pfam" id="PF01254">
    <property type="entry name" value="TP2"/>
    <property type="match status" value="1"/>
</dbReference>
<dbReference type="PROSITE" id="PS00970">
    <property type="entry name" value="TP2_1"/>
    <property type="match status" value="1"/>
</dbReference>
<dbReference type="PROSITE" id="PS00971">
    <property type="entry name" value="TP2_2"/>
    <property type="match status" value="1"/>
</dbReference>
<protein>
    <recommendedName>
        <fullName>Nuclear transition protein 2</fullName>
        <shortName>TP-2</shortName>
        <shortName>TP2</shortName>
    </recommendedName>
</protein>
<name>STP2_MACMU</name>
<sequence>MDTKTHSLPITHTQLHSNSRPQSRTCSQCTCTHHRQTFSQSCRQSQRGSRSRSSSQSPATHQNPTGAHSSSGLQSQSPNASPPPKRHKKTMNSHHSPTRPTILHSSCPKNRKNLEGKLNKKKMAKRIQQVYKTKKRS</sequence>
<reference key="1">
    <citation type="journal article" date="2000" name="Nature">
        <title>Rapid evolution of male reproductive genes in the descent of man.</title>
        <authorList>
            <person name="Wyckoff G.J."/>
            <person name="Wang W."/>
            <person name="Wu C.-I."/>
        </authorList>
    </citation>
    <scope>NUCLEOTIDE SEQUENCE [GENOMIC DNA]</scope>
</reference>